<feature type="chain" id="PRO_1000116337" description="Argininosuccinate lyase">
    <location>
        <begin position="1"/>
        <end position="446"/>
    </location>
</feature>
<evidence type="ECO:0000255" key="1">
    <source>
        <dbReference type="HAMAP-Rule" id="MF_00006"/>
    </source>
</evidence>
<comment type="catalytic activity">
    <reaction evidence="1">
        <text>2-(N(omega)-L-arginino)succinate = fumarate + L-arginine</text>
        <dbReference type="Rhea" id="RHEA:24020"/>
        <dbReference type="ChEBI" id="CHEBI:29806"/>
        <dbReference type="ChEBI" id="CHEBI:32682"/>
        <dbReference type="ChEBI" id="CHEBI:57472"/>
        <dbReference type="EC" id="4.3.2.1"/>
    </reaction>
</comment>
<comment type="pathway">
    <text evidence="1">Amino-acid biosynthesis; L-arginine biosynthesis; L-arginine from L-ornithine and carbamoyl phosphate: step 3/3.</text>
</comment>
<comment type="subcellular location">
    <subcellularLocation>
        <location evidence="1">Cytoplasm</location>
    </subcellularLocation>
</comment>
<comment type="similarity">
    <text evidence="1">Belongs to the lyase 1 family. Argininosuccinate lyase subfamily.</text>
</comment>
<name>ARLY_PARD8</name>
<accession>A6LI67</accession>
<proteinExistence type="inferred from homology"/>
<keyword id="KW-0028">Amino-acid biosynthesis</keyword>
<keyword id="KW-0055">Arginine biosynthesis</keyword>
<keyword id="KW-0963">Cytoplasm</keyword>
<keyword id="KW-0456">Lyase</keyword>
<keyword id="KW-1185">Reference proteome</keyword>
<organism>
    <name type="scientific">Parabacteroides distasonis (strain ATCC 8503 / DSM 20701 / CIP 104284 / JCM 5825 / NCTC 11152)</name>
    <dbReference type="NCBI Taxonomy" id="435591"/>
    <lineage>
        <taxon>Bacteria</taxon>
        <taxon>Pseudomonadati</taxon>
        <taxon>Bacteroidota</taxon>
        <taxon>Bacteroidia</taxon>
        <taxon>Bacteroidales</taxon>
        <taxon>Tannerellaceae</taxon>
        <taxon>Parabacteroides</taxon>
    </lineage>
</organism>
<gene>
    <name evidence="1" type="primary">argH</name>
    <name type="ordered locus">BDI_3689</name>
</gene>
<sequence length="446" mass="50368">MAQKLWEKNVQVDHEVDIFTVGKDREMDLYLAKYDVLGSMAHITMLESIGLLTKEELNVLLAELRNIYAVADRGEFIIEEGIEDVHSQVELMLTRRLGDMGKKIHSGRSRNDQVLLDLKLFTRSQIQELVELVSGLFDVLISQSNRYKDVLLPGYTHLQVAMPSSFGLWFGAYAESLVDDLQLMQAAYRICNRNPLGSAAGYGSSFPLNRQMTTDLLGFDSLDYNVVYAQMGRGKMERTVAFAMAGIAATLSKLAFDACMFNSQNFGFIKLPDQFTTGSSIMPHKKNPDVFELTRAKCNKLQGLPQQIILISNNLPSGYFRDLQIIKEVFLPAFDELKDCLRMVTHMMREVKVNEHILDDDKYSLLFSVEEVNRRVLAGMPFRDAYKQVGLDIEAGKFIPSKSVNHTHEGSIGNLCNESITAMMRSVIGSFSFERMNEAEKKLIHG</sequence>
<reference key="1">
    <citation type="journal article" date="2007" name="PLoS Biol.">
        <title>Evolution of symbiotic bacteria in the distal human intestine.</title>
        <authorList>
            <person name="Xu J."/>
            <person name="Mahowald M.A."/>
            <person name="Ley R.E."/>
            <person name="Lozupone C.A."/>
            <person name="Hamady M."/>
            <person name="Martens E.C."/>
            <person name="Henrissat B."/>
            <person name="Coutinho P.M."/>
            <person name="Minx P."/>
            <person name="Latreille P."/>
            <person name="Cordum H."/>
            <person name="Van Brunt A."/>
            <person name="Kim K."/>
            <person name="Fulton R.S."/>
            <person name="Fulton L.A."/>
            <person name="Clifton S.W."/>
            <person name="Wilson R.K."/>
            <person name="Knight R.D."/>
            <person name="Gordon J.I."/>
        </authorList>
    </citation>
    <scope>NUCLEOTIDE SEQUENCE [LARGE SCALE GENOMIC DNA]</scope>
    <source>
        <strain>ATCC 8503 / DSM 20701 / CIP 104284 / JCM 5825 / NCTC 11152</strain>
    </source>
</reference>
<protein>
    <recommendedName>
        <fullName evidence="1">Argininosuccinate lyase</fullName>
        <shortName evidence="1">ASAL</shortName>
        <ecNumber evidence="1">4.3.2.1</ecNumber>
    </recommendedName>
    <alternativeName>
        <fullName evidence="1">Arginosuccinase</fullName>
    </alternativeName>
</protein>
<dbReference type="EC" id="4.3.2.1" evidence="1"/>
<dbReference type="EMBL" id="CP000140">
    <property type="protein sequence ID" value="ABR45381.1"/>
    <property type="molecule type" value="Genomic_DNA"/>
</dbReference>
<dbReference type="RefSeq" id="WP_012056135.1">
    <property type="nucleotide sequence ID" value="NZ_LR215978.1"/>
</dbReference>
<dbReference type="SMR" id="A6LI67"/>
<dbReference type="STRING" id="435591.BDI_3689"/>
<dbReference type="PaxDb" id="435591-BDI_3689"/>
<dbReference type="KEGG" id="pdi:BDI_3689"/>
<dbReference type="eggNOG" id="COG0165">
    <property type="taxonomic scope" value="Bacteria"/>
</dbReference>
<dbReference type="HOGENOM" id="CLU_027272_2_0_10"/>
<dbReference type="BioCyc" id="PDIS435591:G1G5A-3784-MONOMER"/>
<dbReference type="UniPathway" id="UPA00068">
    <property type="reaction ID" value="UER00114"/>
</dbReference>
<dbReference type="Proteomes" id="UP000000566">
    <property type="component" value="Chromosome"/>
</dbReference>
<dbReference type="GO" id="GO:0005829">
    <property type="term" value="C:cytosol"/>
    <property type="evidence" value="ECO:0007669"/>
    <property type="project" value="TreeGrafter"/>
</dbReference>
<dbReference type="GO" id="GO:0004056">
    <property type="term" value="F:argininosuccinate lyase activity"/>
    <property type="evidence" value="ECO:0007669"/>
    <property type="project" value="UniProtKB-UniRule"/>
</dbReference>
<dbReference type="GO" id="GO:0042450">
    <property type="term" value="P:arginine biosynthetic process via ornithine"/>
    <property type="evidence" value="ECO:0007669"/>
    <property type="project" value="InterPro"/>
</dbReference>
<dbReference type="GO" id="GO:0006526">
    <property type="term" value="P:L-arginine biosynthetic process"/>
    <property type="evidence" value="ECO:0007669"/>
    <property type="project" value="UniProtKB-UniRule"/>
</dbReference>
<dbReference type="CDD" id="cd01359">
    <property type="entry name" value="Argininosuccinate_lyase"/>
    <property type="match status" value="1"/>
</dbReference>
<dbReference type="Gene3D" id="1.10.40.30">
    <property type="entry name" value="Fumarase/aspartase (C-terminal domain)"/>
    <property type="match status" value="1"/>
</dbReference>
<dbReference type="Gene3D" id="1.20.200.10">
    <property type="entry name" value="Fumarase/aspartase (Central domain)"/>
    <property type="match status" value="1"/>
</dbReference>
<dbReference type="Gene3D" id="1.10.275.10">
    <property type="entry name" value="Fumarase/aspartase (N-terminal domain)"/>
    <property type="match status" value="1"/>
</dbReference>
<dbReference type="HAMAP" id="MF_00006">
    <property type="entry name" value="Arg_succ_lyase"/>
    <property type="match status" value="1"/>
</dbReference>
<dbReference type="InterPro" id="IPR009049">
    <property type="entry name" value="Argininosuccinate_lyase"/>
</dbReference>
<dbReference type="InterPro" id="IPR024083">
    <property type="entry name" value="Fumarase/histidase_N"/>
</dbReference>
<dbReference type="InterPro" id="IPR020557">
    <property type="entry name" value="Fumarate_lyase_CS"/>
</dbReference>
<dbReference type="InterPro" id="IPR000362">
    <property type="entry name" value="Fumarate_lyase_fam"/>
</dbReference>
<dbReference type="InterPro" id="IPR022761">
    <property type="entry name" value="Fumarate_lyase_N"/>
</dbReference>
<dbReference type="InterPro" id="IPR008948">
    <property type="entry name" value="L-Aspartase-like"/>
</dbReference>
<dbReference type="NCBIfam" id="TIGR00838">
    <property type="entry name" value="argH"/>
    <property type="match status" value="1"/>
</dbReference>
<dbReference type="PANTHER" id="PTHR43814">
    <property type="entry name" value="ARGININOSUCCINATE LYASE"/>
    <property type="match status" value="1"/>
</dbReference>
<dbReference type="PANTHER" id="PTHR43814:SF1">
    <property type="entry name" value="ARGININOSUCCINATE LYASE"/>
    <property type="match status" value="1"/>
</dbReference>
<dbReference type="Pfam" id="PF00206">
    <property type="entry name" value="Lyase_1"/>
    <property type="match status" value="1"/>
</dbReference>
<dbReference type="PRINTS" id="PR00145">
    <property type="entry name" value="ARGSUCLYASE"/>
</dbReference>
<dbReference type="PRINTS" id="PR00149">
    <property type="entry name" value="FUMRATELYASE"/>
</dbReference>
<dbReference type="SUPFAM" id="SSF48557">
    <property type="entry name" value="L-aspartase-like"/>
    <property type="match status" value="1"/>
</dbReference>
<dbReference type="PROSITE" id="PS00163">
    <property type="entry name" value="FUMARATE_LYASES"/>
    <property type="match status" value="1"/>
</dbReference>